<gene>
    <name evidence="1" type="primary">recA</name>
    <name type="ordered locus">lp_2301</name>
</gene>
<comment type="function">
    <text evidence="1">Can catalyze the hydrolysis of ATP in the presence of single-stranded DNA, the ATP-dependent uptake of single-stranded DNA by duplex DNA, and the ATP-dependent hybridization of homologous single-stranded DNAs. It interacts with LexA causing its activation and leading to its autocatalytic cleavage.</text>
</comment>
<comment type="subcellular location">
    <subcellularLocation>
        <location evidence="1">Cytoplasm</location>
    </subcellularLocation>
</comment>
<comment type="similarity">
    <text evidence="1">Belongs to the RecA family.</text>
</comment>
<organism>
    <name type="scientific">Lactiplantibacillus plantarum (strain ATCC BAA-793 / NCIMB 8826 / WCFS1)</name>
    <name type="common">Lactobacillus plantarum</name>
    <dbReference type="NCBI Taxonomy" id="220668"/>
    <lineage>
        <taxon>Bacteria</taxon>
        <taxon>Bacillati</taxon>
        <taxon>Bacillota</taxon>
        <taxon>Bacilli</taxon>
        <taxon>Lactobacillales</taxon>
        <taxon>Lactobacillaceae</taxon>
        <taxon>Lactiplantibacillus</taxon>
    </lineage>
</organism>
<dbReference type="EMBL" id="AL935263">
    <property type="protein sequence ID" value="CCC79501.1"/>
    <property type="molecule type" value="Genomic_DNA"/>
</dbReference>
<dbReference type="RefSeq" id="WP_003641504.1">
    <property type="nucleotide sequence ID" value="NC_004567.2"/>
</dbReference>
<dbReference type="RefSeq" id="YP_004890015.1">
    <property type="nucleotide sequence ID" value="NC_004567.2"/>
</dbReference>
<dbReference type="SMR" id="Q88UZ4"/>
<dbReference type="STRING" id="220668.lp_2301"/>
<dbReference type="EnsemblBacteria" id="CCC79501">
    <property type="protein sequence ID" value="CCC79501"/>
    <property type="gene ID" value="lp_2301"/>
</dbReference>
<dbReference type="KEGG" id="lpl:lp_2301"/>
<dbReference type="PATRIC" id="fig|220668.9.peg.1945"/>
<dbReference type="eggNOG" id="COG0468">
    <property type="taxonomic scope" value="Bacteria"/>
</dbReference>
<dbReference type="HOGENOM" id="CLU_040469_3_2_9"/>
<dbReference type="OrthoDB" id="9776733at2"/>
<dbReference type="PhylomeDB" id="Q88UZ4"/>
<dbReference type="Proteomes" id="UP000000432">
    <property type="component" value="Chromosome"/>
</dbReference>
<dbReference type="GO" id="GO:0005829">
    <property type="term" value="C:cytosol"/>
    <property type="evidence" value="ECO:0007669"/>
    <property type="project" value="TreeGrafter"/>
</dbReference>
<dbReference type="GO" id="GO:0005524">
    <property type="term" value="F:ATP binding"/>
    <property type="evidence" value="ECO:0007669"/>
    <property type="project" value="UniProtKB-UniRule"/>
</dbReference>
<dbReference type="GO" id="GO:0016887">
    <property type="term" value="F:ATP hydrolysis activity"/>
    <property type="evidence" value="ECO:0007669"/>
    <property type="project" value="InterPro"/>
</dbReference>
<dbReference type="GO" id="GO:0140664">
    <property type="term" value="F:ATP-dependent DNA damage sensor activity"/>
    <property type="evidence" value="ECO:0007669"/>
    <property type="project" value="InterPro"/>
</dbReference>
<dbReference type="GO" id="GO:0003684">
    <property type="term" value="F:damaged DNA binding"/>
    <property type="evidence" value="ECO:0007669"/>
    <property type="project" value="UniProtKB-UniRule"/>
</dbReference>
<dbReference type="GO" id="GO:0003697">
    <property type="term" value="F:single-stranded DNA binding"/>
    <property type="evidence" value="ECO:0007669"/>
    <property type="project" value="UniProtKB-UniRule"/>
</dbReference>
<dbReference type="GO" id="GO:0006310">
    <property type="term" value="P:DNA recombination"/>
    <property type="evidence" value="ECO:0007669"/>
    <property type="project" value="UniProtKB-UniRule"/>
</dbReference>
<dbReference type="GO" id="GO:0006281">
    <property type="term" value="P:DNA repair"/>
    <property type="evidence" value="ECO:0007669"/>
    <property type="project" value="UniProtKB-UniRule"/>
</dbReference>
<dbReference type="GO" id="GO:0009432">
    <property type="term" value="P:SOS response"/>
    <property type="evidence" value="ECO:0007669"/>
    <property type="project" value="UniProtKB-UniRule"/>
</dbReference>
<dbReference type="CDD" id="cd00983">
    <property type="entry name" value="RecA"/>
    <property type="match status" value="1"/>
</dbReference>
<dbReference type="FunFam" id="3.40.50.300:FF:000087">
    <property type="entry name" value="Recombinase RecA"/>
    <property type="match status" value="1"/>
</dbReference>
<dbReference type="Gene3D" id="3.40.50.300">
    <property type="entry name" value="P-loop containing nucleotide triphosphate hydrolases"/>
    <property type="match status" value="1"/>
</dbReference>
<dbReference type="HAMAP" id="MF_00268">
    <property type="entry name" value="RecA"/>
    <property type="match status" value="1"/>
</dbReference>
<dbReference type="InterPro" id="IPR003593">
    <property type="entry name" value="AAA+_ATPase"/>
</dbReference>
<dbReference type="InterPro" id="IPR013765">
    <property type="entry name" value="DNA_recomb/repair_RecA"/>
</dbReference>
<dbReference type="InterPro" id="IPR020584">
    <property type="entry name" value="DNA_recomb/repair_RecA_CS"/>
</dbReference>
<dbReference type="InterPro" id="IPR027417">
    <property type="entry name" value="P-loop_NTPase"/>
</dbReference>
<dbReference type="InterPro" id="IPR049261">
    <property type="entry name" value="RecA-like_C"/>
</dbReference>
<dbReference type="InterPro" id="IPR049428">
    <property type="entry name" value="RecA-like_N"/>
</dbReference>
<dbReference type="InterPro" id="IPR020588">
    <property type="entry name" value="RecA_ATP-bd"/>
</dbReference>
<dbReference type="InterPro" id="IPR023400">
    <property type="entry name" value="RecA_C_sf"/>
</dbReference>
<dbReference type="InterPro" id="IPR020587">
    <property type="entry name" value="RecA_monomer-monomer_interface"/>
</dbReference>
<dbReference type="NCBIfam" id="TIGR02012">
    <property type="entry name" value="tigrfam_recA"/>
    <property type="match status" value="1"/>
</dbReference>
<dbReference type="PANTHER" id="PTHR45900:SF1">
    <property type="entry name" value="MITOCHONDRIAL DNA REPAIR PROTEIN RECA HOMOLOG-RELATED"/>
    <property type="match status" value="1"/>
</dbReference>
<dbReference type="PANTHER" id="PTHR45900">
    <property type="entry name" value="RECA"/>
    <property type="match status" value="1"/>
</dbReference>
<dbReference type="Pfam" id="PF00154">
    <property type="entry name" value="RecA"/>
    <property type="match status" value="1"/>
</dbReference>
<dbReference type="Pfam" id="PF21096">
    <property type="entry name" value="RecA_C"/>
    <property type="match status" value="1"/>
</dbReference>
<dbReference type="PRINTS" id="PR00142">
    <property type="entry name" value="RECA"/>
</dbReference>
<dbReference type="SMART" id="SM00382">
    <property type="entry name" value="AAA"/>
    <property type="match status" value="1"/>
</dbReference>
<dbReference type="SUPFAM" id="SSF52540">
    <property type="entry name" value="P-loop containing nucleoside triphosphate hydrolases"/>
    <property type="match status" value="1"/>
</dbReference>
<dbReference type="SUPFAM" id="SSF54752">
    <property type="entry name" value="RecA protein, C-terminal domain"/>
    <property type="match status" value="1"/>
</dbReference>
<dbReference type="PROSITE" id="PS00321">
    <property type="entry name" value="RECA_1"/>
    <property type="match status" value="1"/>
</dbReference>
<dbReference type="PROSITE" id="PS50162">
    <property type="entry name" value="RECA_2"/>
    <property type="match status" value="1"/>
</dbReference>
<dbReference type="PROSITE" id="PS50163">
    <property type="entry name" value="RECA_3"/>
    <property type="match status" value="1"/>
</dbReference>
<proteinExistence type="inferred from homology"/>
<keyword id="KW-0067">ATP-binding</keyword>
<keyword id="KW-0963">Cytoplasm</keyword>
<keyword id="KW-0227">DNA damage</keyword>
<keyword id="KW-0233">DNA recombination</keyword>
<keyword id="KW-0234">DNA repair</keyword>
<keyword id="KW-0238">DNA-binding</keyword>
<keyword id="KW-0547">Nucleotide-binding</keyword>
<keyword id="KW-1185">Reference proteome</keyword>
<keyword id="KW-0742">SOS response</keyword>
<feature type="chain" id="PRO_0000122736" description="Protein RecA">
    <location>
        <begin position="1"/>
        <end position="380"/>
    </location>
</feature>
<feature type="region of interest" description="Disordered" evidence="2">
    <location>
        <begin position="329"/>
        <end position="380"/>
    </location>
</feature>
<feature type="compositionally biased region" description="Basic and acidic residues" evidence="2">
    <location>
        <begin position="340"/>
        <end position="350"/>
    </location>
</feature>
<feature type="compositionally biased region" description="Polar residues" evidence="2">
    <location>
        <begin position="352"/>
        <end position="364"/>
    </location>
</feature>
<feature type="binding site" evidence="1">
    <location>
        <begin position="65"/>
        <end position="72"/>
    </location>
    <ligand>
        <name>ATP</name>
        <dbReference type="ChEBI" id="CHEBI:30616"/>
    </ligand>
</feature>
<evidence type="ECO:0000255" key="1">
    <source>
        <dbReference type="HAMAP-Rule" id="MF_00268"/>
    </source>
</evidence>
<evidence type="ECO:0000256" key="2">
    <source>
        <dbReference type="SAM" id="MobiDB-lite"/>
    </source>
</evidence>
<reference key="1">
    <citation type="journal article" date="2003" name="Proc. Natl. Acad. Sci. U.S.A.">
        <title>Complete genome sequence of Lactobacillus plantarum WCFS1.</title>
        <authorList>
            <person name="Kleerebezem M."/>
            <person name="Boekhorst J."/>
            <person name="van Kranenburg R."/>
            <person name="Molenaar D."/>
            <person name="Kuipers O.P."/>
            <person name="Leer R."/>
            <person name="Tarchini R."/>
            <person name="Peters S.A."/>
            <person name="Sandbrink H.M."/>
            <person name="Fiers M.W.E.J."/>
            <person name="Stiekema W."/>
            <person name="Klein Lankhorst R.M."/>
            <person name="Bron P.A."/>
            <person name="Hoffer S.M."/>
            <person name="Nierop Groot M.N."/>
            <person name="Kerkhoven R."/>
            <person name="De Vries M."/>
            <person name="Ursing B."/>
            <person name="De Vos W.M."/>
            <person name="Siezen R.J."/>
        </authorList>
    </citation>
    <scope>NUCLEOTIDE SEQUENCE [LARGE SCALE GENOMIC DNA]</scope>
    <source>
        <strain>ATCC BAA-793 / NCIMB 8826 / WCFS1</strain>
    </source>
</reference>
<reference key="2">
    <citation type="journal article" date="2012" name="J. Bacteriol.">
        <title>Complete resequencing and reannotation of the Lactobacillus plantarum WCFS1 genome.</title>
        <authorList>
            <person name="Siezen R.J."/>
            <person name="Francke C."/>
            <person name="Renckens B."/>
            <person name="Boekhorst J."/>
            <person name="Wels M."/>
            <person name="Kleerebezem M."/>
            <person name="van Hijum S.A."/>
        </authorList>
    </citation>
    <scope>NUCLEOTIDE SEQUENCE [LARGE SCALE GENOMIC DNA]</scope>
    <scope>GENOME REANNOTATION</scope>
    <source>
        <strain>ATCC BAA-793 / NCIMB 8826 / WCFS1</strain>
    </source>
</reference>
<sequence>MADARKAALDTALKKIEKNFGKGAIMRMGDAAQTTISTISSGSLALDDALGVGGYPRGRIVEIYGPESSGKTTVALHAVAEVQKQGGTAAYIDAENALDPVYAEHLGVNIDDLLLSQPDTGEQGLEIADALVSSGAVDILVVDSVAALVPRAEIEGEMGDAHVGLQARLMSQALRKLSGTLNKTKTIALFINQIREKVGVMFGNPETTPGGRALKFYATIRLEVRRAEQIKEGTNIIGNRVRIKVVKNKVAPPFKRAEVDIMYGQGISQTGEIVDMAAEKDIVKKSGSWYSYGDDRIGQGRENAKKYLDEHPDVMTEIRQKVRDAYGMDATGEETSETDDQAKEAKDKGTAKNGSKGQSKSTKATPAETALDLGDQPTEK</sequence>
<name>RECA_LACPL</name>
<protein>
    <recommendedName>
        <fullName evidence="1">Protein RecA</fullName>
    </recommendedName>
    <alternativeName>
        <fullName evidence="1">Recombinase A</fullName>
    </alternativeName>
</protein>
<accession>Q88UZ4</accession>
<accession>F9UQL2</accession>